<gene>
    <name evidence="1" type="primary">nusB</name>
    <name type="ordered locus">BWG_0298</name>
</gene>
<name>NUSB_ECOBW</name>
<feature type="chain" id="PRO_1000202477" description="Transcription antitermination protein NusB">
    <location>
        <begin position="1"/>
        <end position="139"/>
    </location>
</feature>
<sequence>MKPAARRRARECAVQALYSWQLSQNDIADVEYQFLAEQDVKDVDVLYFRELLAGVATNTAYLDGLMKPYLSRLLEELGQVEKAVLRIALYELSKRSDVPYKVAINEAIELAKSFGAEDSHKFVNGVLDKAAPVIRPNKK</sequence>
<comment type="function">
    <text evidence="1">Involved in transcription antitermination. Required for transcription of ribosomal RNA (rRNA) genes. Binds specifically to the boxA antiterminator sequence of the ribosomal RNA (rrn) operons.</text>
</comment>
<comment type="similarity">
    <text evidence="1">Belongs to the NusB family.</text>
</comment>
<organism>
    <name type="scientific">Escherichia coli (strain K12 / MC4100 / BW2952)</name>
    <dbReference type="NCBI Taxonomy" id="595496"/>
    <lineage>
        <taxon>Bacteria</taxon>
        <taxon>Pseudomonadati</taxon>
        <taxon>Pseudomonadota</taxon>
        <taxon>Gammaproteobacteria</taxon>
        <taxon>Enterobacterales</taxon>
        <taxon>Enterobacteriaceae</taxon>
        <taxon>Escherichia</taxon>
    </lineage>
</organism>
<dbReference type="EMBL" id="CP001396">
    <property type="protein sequence ID" value="ACR65674.1"/>
    <property type="molecule type" value="Genomic_DNA"/>
</dbReference>
<dbReference type="RefSeq" id="WP_000801125.1">
    <property type="nucleotide sequence ID" value="NC_012759.1"/>
</dbReference>
<dbReference type="SMR" id="C4ZTH3"/>
<dbReference type="GeneID" id="93777044"/>
<dbReference type="KEGG" id="ebw:BWG_0298"/>
<dbReference type="HOGENOM" id="CLU_087843_4_1_6"/>
<dbReference type="GO" id="GO:0005829">
    <property type="term" value="C:cytosol"/>
    <property type="evidence" value="ECO:0007669"/>
    <property type="project" value="TreeGrafter"/>
</dbReference>
<dbReference type="GO" id="GO:0003723">
    <property type="term" value="F:RNA binding"/>
    <property type="evidence" value="ECO:0007669"/>
    <property type="project" value="UniProtKB-UniRule"/>
</dbReference>
<dbReference type="GO" id="GO:0006353">
    <property type="term" value="P:DNA-templated transcription termination"/>
    <property type="evidence" value="ECO:0007669"/>
    <property type="project" value="UniProtKB-UniRule"/>
</dbReference>
<dbReference type="GO" id="GO:0031564">
    <property type="term" value="P:transcription antitermination"/>
    <property type="evidence" value="ECO:0007669"/>
    <property type="project" value="UniProtKB-KW"/>
</dbReference>
<dbReference type="CDD" id="cd00619">
    <property type="entry name" value="Terminator_NusB"/>
    <property type="match status" value="1"/>
</dbReference>
<dbReference type="FunFam" id="1.10.940.10:FF:000001">
    <property type="entry name" value="Transcription antitermination factor NusB"/>
    <property type="match status" value="1"/>
</dbReference>
<dbReference type="Gene3D" id="1.10.940.10">
    <property type="entry name" value="NusB-like"/>
    <property type="match status" value="1"/>
</dbReference>
<dbReference type="HAMAP" id="MF_00073">
    <property type="entry name" value="NusB"/>
    <property type="match status" value="1"/>
</dbReference>
<dbReference type="InterPro" id="IPR035926">
    <property type="entry name" value="NusB-like_sf"/>
</dbReference>
<dbReference type="InterPro" id="IPR011605">
    <property type="entry name" value="NusB_fam"/>
</dbReference>
<dbReference type="InterPro" id="IPR006027">
    <property type="entry name" value="NusB_RsmB_TIM44"/>
</dbReference>
<dbReference type="NCBIfam" id="TIGR01951">
    <property type="entry name" value="nusB"/>
    <property type="match status" value="1"/>
</dbReference>
<dbReference type="PANTHER" id="PTHR11078:SF3">
    <property type="entry name" value="ANTITERMINATION NUSB DOMAIN-CONTAINING PROTEIN"/>
    <property type="match status" value="1"/>
</dbReference>
<dbReference type="PANTHER" id="PTHR11078">
    <property type="entry name" value="N UTILIZATION SUBSTANCE PROTEIN B-RELATED"/>
    <property type="match status" value="1"/>
</dbReference>
<dbReference type="Pfam" id="PF01029">
    <property type="entry name" value="NusB"/>
    <property type="match status" value="1"/>
</dbReference>
<dbReference type="SUPFAM" id="SSF48013">
    <property type="entry name" value="NusB-like"/>
    <property type="match status" value="1"/>
</dbReference>
<proteinExistence type="inferred from homology"/>
<protein>
    <recommendedName>
        <fullName evidence="1">Transcription antitermination protein NusB</fullName>
    </recommendedName>
    <alternativeName>
        <fullName evidence="1">Antitermination factor NusB</fullName>
    </alternativeName>
</protein>
<evidence type="ECO:0000255" key="1">
    <source>
        <dbReference type="HAMAP-Rule" id="MF_00073"/>
    </source>
</evidence>
<accession>C4ZTH3</accession>
<reference key="1">
    <citation type="journal article" date="2009" name="J. Bacteriol.">
        <title>Genomic sequencing reveals regulatory mutations and recombinational events in the widely used MC4100 lineage of Escherichia coli K-12.</title>
        <authorList>
            <person name="Ferenci T."/>
            <person name="Zhou Z."/>
            <person name="Betteridge T."/>
            <person name="Ren Y."/>
            <person name="Liu Y."/>
            <person name="Feng L."/>
            <person name="Reeves P.R."/>
            <person name="Wang L."/>
        </authorList>
    </citation>
    <scope>NUCLEOTIDE SEQUENCE [LARGE SCALE GENOMIC DNA]</scope>
    <source>
        <strain>K12 / MC4100 / BW2952</strain>
    </source>
</reference>
<keyword id="KW-0694">RNA-binding</keyword>
<keyword id="KW-0804">Transcription</keyword>
<keyword id="KW-0889">Transcription antitermination</keyword>
<keyword id="KW-0805">Transcription regulation</keyword>